<feature type="signal peptide" evidence="2">
    <location>
        <begin position="1"/>
        <end position="23"/>
    </location>
</feature>
<feature type="chain" id="PRO_0000429728" description="Alpha carbonic anhydrase 2">
    <location>
        <begin position="24"/>
        <end position="245"/>
    </location>
</feature>
<feature type="domain" description="Alpha-carbonic anhydrase" evidence="3">
    <location>
        <begin position="37"/>
        <end position="245"/>
    </location>
</feature>
<feature type="active site" description="Proton acceptor" evidence="3">
    <location>
        <position position="103"/>
    </location>
</feature>
<feature type="binding site" evidence="3">
    <location>
        <position position="130"/>
    </location>
    <ligand>
        <name>Zn(2+)</name>
        <dbReference type="ChEBI" id="CHEBI:29105"/>
        <note>catalytic</note>
    </ligand>
</feature>
<feature type="binding site" evidence="3">
    <location>
        <position position="132"/>
    </location>
    <ligand>
        <name>Zn(2+)</name>
        <dbReference type="ChEBI" id="CHEBI:29105"/>
        <note>catalytic</note>
    </ligand>
</feature>
<feature type="binding site" evidence="3">
    <location>
        <position position="149"/>
    </location>
    <ligand>
        <name>Zn(2+)</name>
        <dbReference type="ChEBI" id="CHEBI:29105"/>
        <note>catalytic</note>
    </ligand>
</feature>
<feature type="binding site" evidence="1">
    <location>
        <begin position="218"/>
        <end position="219"/>
    </location>
    <ligand>
        <name>substrate</name>
    </ligand>
</feature>
<feature type="glycosylation site" description="N-linked (GlcNAc...) asparagine" evidence="2">
    <location>
        <position position="95"/>
    </location>
</feature>
<feature type="glycosylation site" description="N-linked (GlcNAc...) asparagine" evidence="2">
    <location>
        <position position="120"/>
    </location>
</feature>
<feature type="glycosylation site" description="N-linked (GlcNAc...) asparagine" evidence="2">
    <location>
        <position position="156"/>
    </location>
</feature>
<feature type="disulfide bond" evidence="1">
    <location>
        <begin position="62"/>
        <end position="222"/>
    </location>
</feature>
<accession>F4IHR4</accession>
<accession>Q9SL34</accession>
<reference key="1">
    <citation type="journal article" date="1999" name="Nature">
        <title>Sequence and analysis of chromosome 2 of the plant Arabidopsis thaliana.</title>
        <authorList>
            <person name="Lin X."/>
            <person name="Kaul S."/>
            <person name="Rounsley S.D."/>
            <person name="Shea T.P."/>
            <person name="Benito M.-I."/>
            <person name="Town C.D."/>
            <person name="Fujii C.Y."/>
            <person name="Mason T.M."/>
            <person name="Bowman C.L."/>
            <person name="Barnstead M.E."/>
            <person name="Feldblyum T.V."/>
            <person name="Buell C.R."/>
            <person name="Ketchum K.A."/>
            <person name="Lee J.J."/>
            <person name="Ronning C.M."/>
            <person name="Koo H.L."/>
            <person name="Moffat K.S."/>
            <person name="Cronin L.A."/>
            <person name="Shen M."/>
            <person name="Pai G."/>
            <person name="Van Aken S."/>
            <person name="Umayam L."/>
            <person name="Tallon L.J."/>
            <person name="Gill J.E."/>
            <person name="Adams M.D."/>
            <person name="Carrera A.J."/>
            <person name="Creasy T.H."/>
            <person name="Goodman H.M."/>
            <person name="Somerville C.R."/>
            <person name="Copenhaver G.P."/>
            <person name="Preuss D."/>
            <person name="Nierman W.C."/>
            <person name="White O."/>
            <person name="Eisen J.A."/>
            <person name="Salzberg S.L."/>
            <person name="Fraser C.M."/>
            <person name="Venter J.C."/>
        </authorList>
    </citation>
    <scope>NUCLEOTIDE SEQUENCE [LARGE SCALE GENOMIC DNA]</scope>
    <source>
        <strain>cv. Columbia</strain>
    </source>
</reference>
<reference key="2">
    <citation type="journal article" date="2017" name="Plant J.">
        <title>Araport11: a complete reannotation of the Arabidopsis thaliana reference genome.</title>
        <authorList>
            <person name="Cheng C.Y."/>
            <person name="Krishnakumar V."/>
            <person name="Chan A.P."/>
            <person name="Thibaud-Nissen F."/>
            <person name="Schobel S."/>
            <person name="Town C.D."/>
        </authorList>
    </citation>
    <scope>GENOME REANNOTATION</scope>
    <source>
        <strain>cv. Columbia</strain>
    </source>
</reference>
<reference key="3">
    <citation type="journal article" date="2007" name="Plant Cell Environ.">
        <title>Characterization and expression analysis of genes encoding alpha and beta carbonic anhydrases in Arabidopsis.</title>
        <authorList>
            <person name="Fabre N."/>
            <person name="Reiter I.M."/>
            <person name="Becuwe-Linka N."/>
            <person name="Genty B."/>
            <person name="Rumeau D."/>
        </authorList>
    </citation>
    <scope>TISSUE SPECIFICITY</scope>
    <scope>INDUCTION BY CO2</scope>
    <scope>GENE FAMILY</scope>
    <scope>NOMENCLATURE</scope>
    <source>
        <strain>cv. Columbia</strain>
    </source>
</reference>
<comment type="function">
    <text evidence="1">Reversible hydration of carbon dioxide.</text>
</comment>
<comment type="catalytic activity">
    <reaction>
        <text>hydrogencarbonate + H(+) = CO2 + H2O</text>
        <dbReference type="Rhea" id="RHEA:10748"/>
        <dbReference type="ChEBI" id="CHEBI:15377"/>
        <dbReference type="ChEBI" id="CHEBI:15378"/>
        <dbReference type="ChEBI" id="CHEBI:16526"/>
        <dbReference type="ChEBI" id="CHEBI:17544"/>
        <dbReference type="EC" id="4.2.1.1"/>
    </reaction>
</comment>
<comment type="cofactor">
    <cofactor evidence="1">
        <name>Zn(2+)</name>
        <dbReference type="ChEBI" id="CHEBI:29105"/>
    </cofactor>
</comment>
<comment type="subcellular location">
    <subcellularLocation>
        <location evidence="1">Plastid</location>
        <location evidence="1">Chloroplast stroma</location>
    </subcellularLocation>
    <text evidence="1">Targeted to the chloroplast via a protein-targeting pathway that uses the secretory system.</text>
</comment>
<comment type="tissue specificity">
    <text evidence="4">Expressed in stems and roots.</text>
</comment>
<comment type="induction">
    <text evidence="4">Accumulates in low CO(2) conditions.</text>
</comment>
<comment type="PTM">
    <text evidence="1">N-glycosylated.</text>
</comment>
<comment type="similarity">
    <text evidence="5">Belongs to the alpha-class carbonic anhydrase family.</text>
</comment>
<comment type="sequence caution" evidence="5">
    <conflict type="erroneous gene model prediction">
        <sequence resource="EMBL-CDS" id="AAD29832"/>
    </conflict>
</comment>
<keyword id="KW-0150">Chloroplast</keyword>
<keyword id="KW-1015">Disulfide bond</keyword>
<keyword id="KW-0325">Glycoprotein</keyword>
<keyword id="KW-0456">Lyase</keyword>
<keyword id="KW-0479">Metal-binding</keyword>
<keyword id="KW-0934">Plastid</keyword>
<keyword id="KW-1185">Reference proteome</keyword>
<keyword id="KW-0732">Signal</keyword>
<keyword id="KW-0862">Zinc</keyword>
<organism>
    <name type="scientific">Arabidopsis thaliana</name>
    <name type="common">Mouse-ear cress</name>
    <dbReference type="NCBI Taxonomy" id="3702"/>
    <lineage>
        <taxon>Eukaryota</taxon>
        <taxon>Viridiplantae</taxon>
        <taxon>Streptophyta</taxon>
        <taxon>Embryophyta</taxon>
        <taxon>Tracheophyta</taxon>
        <taxon>Spermatophyta</taxon>
        <taxon>Magnoliopsida</taxon>
        <taxon>eudicotyledons</taxon>
        <taxon>Gunneridae</taxon>
        <taxon>Pentapetalae</taxon>
        <taxon>rosids</taxon>
        <taxon>malvids</taxon>
        <taxon>Brassicales</taxon>
        <taxon>Brassicaceae</taxon>
        <taxon>Camelineae</taxon>
        <taxon>Arabidopsis</taxon>
    </lineage>
</organism>
<sequence length="245" mass="28362">MDKISIRCFIFLVLTSFVTTVSCLSAATDYREVEDEHEFSYEWNQENGPAKWGKLRPEWKMCGKGEMQSPIDLMNKRVRLVTHLKKLTRHYKPCNATLKNRGHDMMLKFGEEGSGSITVNGTEYKLLQLHWHSPSEHTMNGRRFALELHMVHENINGSLAVVTVLYKIGRPDSFLGLLENKLSAITDQNEAEKYVDVIDPRDIKIGSRKFYRYIGSLTTPPCTQNVIWTVVKKVNTHRYFLLFFT</sequence>
<gene>
    <name type="primary">ACA2</name>
    <name type="ordered locus">At2g28210</name>
    <name type="ORF">T3B23.12</name>
</gene>
<dbReference type="EC" id="4.2.1.1"/>
<dbReference type="EMBL" id="AC006202">
    <property type="protein sequence ID" value="AAD29832.1"/>
    <property type="status" value="ALT_SEQ"/>
    <property type="molecule type" value="Genomic_DNA"/>
</dbReference>
<dbReference type="EMBL" id="CP002685">
    <property type="status" value="NOT_ANNOTATED_CDS"/>
    <property type="molecule type" value="Genomic_DNA"/>
</dbReference>
<dbReference type="PIR" id="B84682">
    <property type="entry name" value="B84682"/>
</dbReference>
<dbReference type="SMR" id="F4IHR4"/>
<dbReference type="FunCoup" id="F4IHR4">
    <property type="interactions" value="38"/>
</dbReference>
<dbReference type="STRING" id="3702.F4IHR4"/>
<dbReference type="GlyCosmos" id="F4IHR4">
    <property type="glycosylation" value="3 sites, No reported glycans"/>
</dbReference>
<dbReference type="GlyGen" id="F4IHR4">
    <property type="glycosylation" value="3 sites"/>
</dbReference>
<dbReference type="PaxDb" id="3702-AT2G28210.1"/>
<dbReference type="PeptideAtlas" id="F4IHR4"/>
<dbReference type="ProteomicsDB" id="246722"/>
<dbReference type="Araport" id="AT2G28210"/>
<dbReference type="TAIR" id="AT2G28210">
    <property type="gene designation" value="ACA2"/>
</dbReference>
<dbReference type="eggNOG" id="KOG0382">
    <property type="taxonomic scope" value="Eukaryota"/>
</dbReference>
<dbReference type="HOGENOM" id="CLU_039326_0_0_1"/>
<dbReference type="InParanoid" id="F4IHR4"/>
<dbReference type="PRO" id="PR:F4IHR4"/>
<dbReference type="Proteomes" id="UP000006548">
    <property type="component" value="Chromosome 2"/>
</dbReference>
<dbReference type="ExpressionAtlas" id="F4IHR4">
    <property type="expression patterns" value="baseline and differential"/>
</dbReference>
<dbReference type="GO" id="GO:0009570">
    <property type="term" value="C:chloroplast stroma"/>
    <property type="evidence" value="ECO:0007669"/>
    <property type="project" value="UniProtKB-SubCell"/>
</dbReference>
<dbReference type="GO" id="GO:0016020">
    <property type="term" value="C:membrane"/>
    <property type="evidence" value="ECO:0000314"/>
    <property type="project" value="TAIR"/>
</dbReference>
<dbReference type="GO" id="GO:0004089">
    <property type="term" value="F:carbonate dehydratase activity"/>
    <property type="evidence" value="ECO:0007669"/>
    <property type="project" value="UniProtKB-EC"/>
</dbReference>
<dbReference type="GO" id="GO:0016836">
    <property type="term" value="F:hydro-lyase activity"/>
    <property type="evidence" value="ECO:0000318"/>
    <property type="project" value="GO_Central"/>
</dbReference>
<dbReference type="GO" id="GO:0008270">
    <property type="term" value="F:zinc ion binding"/>
    <property type="evidence" value="ECO:0007669"/>
    <property type="project" value="InterPro"/>
</dbReference>
<dbReference type="GO" id="GO:0010037">
    <property type="term" value="P:response to carbon dioxide"/>
    <property type="evidence" value="ECO:0000270"/>
    <property type="project" value="TAIR"/>
</dbReference>
<dbReference type="CDD" id="cd03124">
    <property type="entry name" value="alpha_CA_prokaryotic_like"/>
    <property type="match status" value="1"/>
</dbReference>
<dbReference type="FunFam" id="3.10.200.10:FF:000007">
    <property type="entry name" value="Alpha carbonic anhydrase 3"/>
    <property type="match status" value="1"/>
</dbReference>
<dbReference type="Gene3D" id="3.10.200.10">
    <property type="entry name" value="Alpha carbonic anhydrase"/>
    <property type="match status" value="1"/>
</dbReference>
<dbReference type="InterPro" id="IPR041891">
    <property type="entry name" value="Alpha_CA_prokaryot-like"/>
</dbReference>
<dbReference type="InterPro" id="IPR001148">
    <property type="entry name" value="CA_dom"/>
</dbReference>
<dbReference type="InterPro" id="IPR036398">
    <property type="entry name" value="CA_dom_sf"/>
</dbReference>
<dbReference type="InterPro" id="IPR023561">
    <property type="entry name" value="Carbonic_anhydrase_a-class"/>
</dbReference>
<dbReference type="InterPro" id="IPR018338">
    <property type="entry name" value="Carbonic_anhydrase_a-class_CS"/>
</dbReference>
<dbReference type="PANTHER" id="PTHR18952:SF254">
    <property type="entry name" value="ALPHA CARBONIC ANHYDRASE 2"/>
    <property type="match status" value="1"/>
</dbReference>
<dbReference type="PANTHER" id="PTHR18952">
    <property type="entry name" value="CARBONIC ANHYDRASE"/>
    <property type="match status" value="1"/>
</dbReference>
<dbReference type="Pfam" id="PF00194">
    <property type="entry name" value="Carb_anhydrase"/>
    <property type="match status" value="1"/>
</dbReference>
<dbReference type="SMART" id="SM01057">
    <property type="entry name" value="Carb_anhydrase"/>
    <property type="match status" value="1"/>
</dbReference>
<dbReference type="SUPFAM" id="SSF51069">
    <property type="entry name" value="Carbonic anhydrase"/>
    <property type="match status" value="1"/>
</dbReference>
<dbReference type="PROSITE" id="PS00162">
    <property type="entry name" value="ALPHA_CA_1"/>
    <property type="match status" value="1"/>
</dbReference>
<dbReference type="PROSITE" id="PS51144">
    <property type="entry name" value="ALPHA_CA_2"/>
    <property type="match status" value="1"/>
</dbReference>
<name>ATCA2_ARATH</name>
<proteinExistence type="evidence at transcript level"/>
<evidence type="ECO:0000250" key="1"/>
<evidence type="ECO:0000255" key="2"/>
<evidence type="ECO:0000255" key="3">
    <source>
        <dbReference type="PROSITE-ProRule" id="PRU01134"/>
    </source>
</evidence>
<evidence type="ECO:0000269" key="4">
    <source>
    </source>
</evidence>
<evidence type="ECO:0000305" key="5"/>
<protein>
    <recommendedName>
        <fullName>Alpha carbonic anhydrase 2</fullName>
        <shortName>AtaCA2</shortName>
        <shortName>AtalphaCA2</shortName>
        <ecNumber>4.2.1.1</ecNumber>
    </recommendedName>
    <alternativeName>
        <fullName>Alpha carbonate dehydratase 2</fullName>
    </alternativeName>
</protein>